<feature type="chain" id="PRO_1000073980" description="Dihydroxy-acid dehydratase">
    <location>
        <begin position="1"/>
        <end position="614"/>
    </location>
</feature>
<feature type="active site" description="Proton acceptor" evidence="1">
    <location>
        <position position="515"/>
    </location>
</feature>
<feature type="binding site" evidence="1">
    <location>
        <position position="81"/>
    </location>
    <ligand>
        <name>Mg(2+)</name>
        <dbReference type="ChEBI" id="CHEBI:18420"/>
    </ligand>
</feature>
<feature type="binding site" evidence="1">
    <location>
        <position position="122"/>
    </location>
    <ligand>
        <name>[2Fe-2S] cluster</name>
        <dbReference type="ChEBI" id="CHEBI:190135"/>
    </ligand>
</feature>
<feature type="binding site" evidence="1">
    <location>
        <position position="123"/>
    </location>
    <ligand>
        <name>Mg(2+)</name>
        <dbReference type="ChEBI" id="CHEBI:18420"/>
    </ligand>
</feature>
<feature type="binding site" description="via carbamate group" evidence="1">
    <location>
        <position position="124"/>
    </location>
    <ligand>
        <name>Mg(2+)</name>
        <dbReference type="ChEBI" id="CHEBI:18420"/>
    </ligand>
</feature>
<feature type="binding site" evidence="1">
    <location>
        <position position="193"/>
    </location>
    <ligand>
        <name>[2Fe-2S] cluster</name>
        <dbReference type="ChEBI" id="CHEBI:190135"/>
    </ligand>
</feature>
<feature type="binding site" evidence="1">
    <location>
        <position position="489"/>
    </location>
    <ligand>
        <name>Mg(2+)</name>
        <dbReference type="ChEBI" id="CHEBI:18420"/>
    </ligand>
</feature>
<feature type="modified residue" description="N6-carboxylysine" evidence="1">
    <location>
        <position position="124"/>
    </location>
</feature>
<proteinExistence type="inferred from homology"/>
<comment type="function">
    <text evidence="1">Functions in the biosynthesis of branched-chain amino acids. Catalyzes the dehydration of (2R,3R)-2,3-dihydroxy-3-methylpentanoate (2,3-dihydroxy-3-methylvalerate) into 2-oxo-3-methylpentanoate (2-oxo-3-methylvalerate) and of (2R)-2,3-dihydroxy-3-methylbutanoate (2,3-dihydroxyisovalerate) into 2-oxo-3-methylbutanoate (2-oxoisovalerate), the penultimate precursor to L-isoleucine and L-valine, respectively.</text>
</comment>
<comment type="catalytic activity">
    <reaction evidence="1">
        <text>(2R)-2,3-dihydroxy-3-methylbutanoate = 3-methyl-2-oxobutanoate + H2O</text>
        <dbReference type="Rhea" id="RHEA:24809"/>
        <dbReference type="ChEBI" id="CHEBI:11851"/>
        <dbReference type="ChEBI" id="CHEBI:15377"/>
        <dbReference type="ChEBI" id="CHEBI:49072"/>
        <dbReference type="EC" id="4.2.1.9"/>
    </reaction>
    <physiologicalReaction direction="left-to-right" evidence="1">
        <dbReference type="Rhea" id="RHEA:24810"/>
    </physiologicalReaction>
</comment>
<comment type="catalytic activity">
    <reaction evidence="1">
        <text>(2R,3R)-2,3-dihydroxy-3-methylpentanoate = (S)-3-methyl-2-oxopentanoate + H2O</text>
        <dbReference type="Rhea" id="RHEA:27694"/>
        <dbReference type="ChEBI" id="CHEBI:15377"/>
        <dbReference type="ChEBI" id="CHEBI:35146"/>
        <dbReference type="ChEBI" id="CHEBI:49258"/>
        <dbReference type="EC" id="4.2.1.9"/>
    </reaction>
    <physiologicalReaction direction="left-to-right" evidence="1">
        <dbReference type="Rhea" id="RHEA:27695"/>
    </physiologicalReaction>
</comment>
<comment type="cofactor">
    <cofactor evidence="1">
        <name>[2Fe-2S] cluster</name>
        <dbReference type="ChEBI" id="CHEBI:190135"/>
    </cofactor>
    <text evidence="1">Binds 1 [2Fe-2S] cluster per subunit. This cluster acts as a Lewis acid cofactor.</text>
</comment>
<comment type="cofactor">
    <cofactor evidence="1">
        <name>Mg(2+)</name>
        <dbReference type="ChEBI" id="CHEBI:18420"/>
    </cofactor>
</comment>
<comment type="pathway">
    <text evidence="1">Amino-acid biosynthesis; L-isoleucine biosynthesis; L-isoleucine from 2-oxobutanoate: step 3/4.</text>
</comment>
<comment type="pathway">
    <text evidence="1">Amino-acid biosynthesis; L-valine biosynthesis; L-valine from pyruvate: step 3/4.</text>
</comment>
<comment type="subunit">
    <text evidence="1">Homodimer.</text>
</comment>
<comment type="similarity">
    <text evidence="1">Belongs to the IlvD/Edd family.</text>
</comment>
<evidence type="ECO:0000255" key="1">
    <source>
        <dbReference type="HAMAP-Rule" id="MF_00012"/>
    </source>
</evidence>
<protein>
    <recommendedName>
        <fullName evidence="1">Dihydroxy-acid dehydratase</fullName>
        <shortName evidence="1">DAD</shortName>
        <ecNumber evidence="1">4.2.1.9</ecNumber>
    </recommendedName>
</protein>
<dbReference type="EC" id="4.2.1.9" evidence="1"/>
<dbReference type="EMBL" id="CP000749">
    <property type="protein sequence ID" value="ABR72638.1"/>
    <property type="molecule type" value="Genomic_DNA"/>
</dbReference>
<dbReference type="SMR" id="A6W1Q9"/>
<dbReference type="STRING" id="400668.Mmwyl1_3737"/>
<dbReference type="KEGG" id="mmw:Mmwyl1_3737"/>
<dbReference type="eggNOG" id="COG0129">
    <property type="taxonomic scope" value="Bacteria"/>
</dbReference>
<dbReference type="HOGENOM" id="CLU_014271_4_2_6"/>
<dbReference type="OrthoDB" id="9807077at2"/>
<dbReference type="UniPathway" id="UPA00047">
    <property type="reaction ID" value="UER00057"/>
</dbReference>
<dbReference type="UniPathway" id="UPA00049">
    <property type="reaction ID" value="UER00061"/>
</dbReference>
<dbReference type="GO" id="GO:0005829">
    <property type="term" value="C:cytosol"/>
    <property type="evidence" value="ECO:0007669"/>
    <property type="project" value="TreeGrafter"/>
</dbReference>
<dbReference type="GO" id="GO:0051537">
    <property type="term" value="F:2 iron, 2 sulfur cluster binding"/>
    <property type="evidence" value="ECO:0007669"/>
    <property type="project" value="UniProtKB-UniRule"/>
</dbReference>
<dbReference type="GO" id="GO:0004160">
    <property type="term" value="F:dihydroxy-acid dehydratase activity"/>
    <property type="evidence" value="ECO:0007669"/>
    <property type="project" value="UniProtKB-UniRule"/>
</dbReference>
<dbReference type="GO" id="GO:0000287">
    <property type="term" value="F:magnesium ion binding"/>
    <property type="evidence" value="ECO:0007669"/>
    <property type="project" value="UniProtKB-UniRule"/>
</dbReference>
<dbReference type="GO" id="GO:0009097">
    <property type="term" value="P:isoleucine biosynthetic process"/>
    <property type="evidence" value="ECO:0007669"/>
    <property type="project" value="UniProtKB-UniRule"/>
</dbReference>
<dbReference type="GO" id="GO:0009099">
    <property type="term" value="P:L-valine biosynthetic process"/>
    <property type="evidence" value="ECO:0007669"/>
    <property type="project" value="UniProtKB-UniRule"/>
</dbReference>
<dbReference type="FunFam" id="3.50.30.80:FF:000001">
    <property type="entry name" value="Dihydroxy-acid dehydratase"/>
    <property type="match status" value="1"/>
</dbReference>
<dbReference type="Gene3D" id="3.50.30.80">
    <property type="entry name" value="IlvD/EDD C-terminal domain-like"/>
    <property type="match status" value="1"/>
</dbReference>
<dbReference type="HAMAP" id="MF_00012">
    <property type="entry name" value="IlvD"/>
    <property type="match status" value="1"/>
</dbReference>
<dbReference type="InterPro" id="IPR042096">
    <property type="entry name" value="Dihydro-acid_dehy_C"/>
</dbReference>
<dbReference type="InterPro" id="IPR004404">
    <property type="entry name" value="DihydroxyA_deHydtase"/>
</dbReference>
<dbReference type="InterPro" id="IPR020558">
    <property type="entry name" value="DiOHA_6PGluconate_deHydtase_CS"/>
</dbReference>
<dbReference type="InterPro" id="IPR056740">
    <property type="entry name" value="ILV_EDD_C"/>
</dbReference>
<dbReference type="InterPro" id="IPR000581">
    <property type="entry name" value="ILV_EDD_N"/>
</dbReference>
<dbReference type="InterPro" id="IPR037237">
    <property type="entry name" value="IlvD/EDD_N"/>
</dbReference>
<dbReference type="NCBIfam" id="TIGR00110">
    <property type="entry name" value="ilvD"/>
    <property type="match status" value="1"/>
</dbReference>
<dbReference type="NCBIfam" id="NF009103">
    <property type="entry name" value="PRK12448.1"/>
    <property type="match status" value="1"/>
</dbReference>
<dbReference type="PANTHER" id="PTHR43661">
    <property type="entry name" value="D-XYLONATE DEHYDRATASE"/>
    <property type="match status" value="1"/>
</dbReference>
<dbReference type="PANTHER" id="PTHR43661:SF3">
    <property type="entry name" value="D-XYLONATE DEHYDRATASE YAGF-RELATED"/>
    <property type="match status" value="1"/>
</dbReference>
<dbReference type="Pfam" id="PF24877">
    <property type="entry name" value="ILV_EDD_C"/>
    <property type="match status" value="1"/>
</dbReference>
<dbReference type="Pfam" id="PF00920">
    <property type="entry name" value="ILVD_EDD_N"/>
    <property type="match status" value="1"/>
</dbReference>
<dbReference type="SUPFAM" id="SSF143975">
    <property type="entry name" value="IlvD/EDD N-terminal domain-like"/>
    <property type="match status" value="1"/>
</dbReference>
<dbReference type="SUPFAM" id="SSF52016">
    <property type="entry name" value="LeuD/IlvD-like"/>
    <property type="match status" value="1"/>
</dbReference>
<dbReference type="PROSITE" id="PS00886">
    <property type="entry name" value="ILVD_EDD_1"/>
    <property type="match status" value="1"/>
</dbReference>
<dbReference type="PROSITE" id="PS00887">
    <property type="entry name" value="ILVD_EDD_2"/>
    <property type="match status" value="1"/>
</dbReference>
<name>ILVD_MARMS</name>
<gene>
    <name evidence="1" type="primary">ilvD</name>
    <name type="ordered locus">Mmwyl1_3737</name>
</gene>
<accession>A6W1Q9</accession>
<reference key="1">
    <citation type="submission" date="2007-06" db="EMBL/GenBank/DDBJ databases">
        <title>Complete sequence of Marinomonas sp. MWYL1.</title>
        <authorList>
            <consortium name="US DOE Joint Genome Institute"/>
            <person name="Copeland A."/>
            <person name="Lucas S."/>
            <person name="Lapidus A."/>
            <person name="Barry K."/>
            <person name="Glavina del Rio T."/>
            <person name="Dalin E."/>
            <person name="Tice H."/>
            <person name="Pitluck S."/>
            <person name="Kiss H."/>
            <person name="Brettin T."/>
            <person name="Bruce D."/>
            <person name="Detter J.C."/>
            <person name="Han C."/>
            <person name="Schmutz J."/>
            <person name="Larimer F."/>
            <person name="Land M."/>
            <person name="Hauser L."/>
            <person name="Kyrpides N."/>
            <person name="Kim E."/>
            <person name="Johnston A.W.B."/>
            <person name="Todd J.D."/>
            <person name="Rogers R."/>
            <person name="Wexler M."/>
            <person name="Bond P.L."/>
            <person name="Li Y."/>
            <person name="Richardson P."/>
        </authorList>
    </citation>
    <scope>NUCLEOTIDE SEQUENCE [LARGE SCALE GENOMIC DNA]</scope>
    <source>
        <strain>MWYL1</strain>
    </source>
</reference>
<sequence length="614" mass="65903">MPVYRSKTTTSGRNMAGARALWRATGMTDDDFQKPIIAVVNSFTQFVPGHVHLKDMGQLVAREIEAAGGVAKEFNTIAVDDGIAMGHDGMLYSLPSRDLIADSVEYMVNAHCADAMVCISNCDKITPGMLMAAMRINIPVIFVSGGPMEAGKTKLSENKLDLVDAMVIAADPTATDERVAEYERSACPTCGSCSGMFTANSMNCLTEALGLSLPGNGTTLATHSDRRRLFLDAGRRIVDITKRYYENDEANWAPRSIASFEAFENAMTLDIAMGGSTNTILHLLAIAREAGVDFSMEDIDRLSRKVPQLCKVAPNSPKYHVEDVHRAGGIFALLGELDRGGILHNQCHTVHSKTMLEALKSWDIMRSPTPEIIEFYKAGPAGIPTQTAFSQSTRWPSLDGDRAEGCIRSIENAFSLEGGLAVLYGNIAVDGCVVKSAGVDESILVFEGRAHVTESQDEAVKNILDDKVEAGDIVIVRYEGPKGGPGMQEMLYPTSYIKSKGLGKACALLTDGRFSGGTSGLSIGHVSPEAAAGGAIGLVENGDRILIDIPNRSINVLLSDEELAKRRAAMEAKGAAAWKPVEMRPRKVSPALKVYAHFATSADKGAVRDISQID</sequence>
<organism>
    <name type="scientific">Marinomonas sp. (strain MWYL1)</name>
    <dbReference type="NCBI Taxonomy" id="400668"/>
    <lineage>
        <taxon>Bacteria</taxon>
        <taxon>Pseudomonadati</taxon>
        <taxon>Pseudomonadota</taxon>
        <taxon>Gammaproteobacteria</taxon>
        <taxon>Oceanospirillales</taxon>
        <taxon>Oceanospirillaceae</taxon>
        <taxon>Marinomonas</taxon>
    </lineage>
</organism>
<keyword id="KW-0001">2Fe-2S</keyword>
<keyword id="KW-0028">Amino-acid biosynthesis</keyword>
<keyword id="KW-0100">Branched-chain amino acid biosynthesis</keyword>
<keyword id="KW-0408">Iron</keyword>
<keyword id="KW-0411">Iron-sulfur</keyword>
<keyword id="KW-0456">Lyase</keyword>
<keyword id="KW-0460">Magnesium</keyword>
<keyword id="KW-0479">Metal-binding</keyword>